<proteinExistence type="inferred from homology"/>
<sequence>MFMNRWLFSTNHKDIGTLYLLFGAWAGMVGTGLSLLIRAELGQPGTLIGDDQVYNVLVTAHAFVMIFFMVMPIMIGGFGNWLVPLMIGAPDMAFPRMNNMSFWLLPPSFLLLMASSMVEAGAGTGWTVYPPLAGNLAHAGASVDLTIFSLHLAGVSSILGAINFITTIINMKPPAMTQYQTPLFVWSVLVTAVLLLLSLPVLAAGITMLLTDRNLNTTFFDPAGGGDPILYQHLFWFFGHPEVYILILPGFGMISHIVTYYSGKKEPFGYMGMVWAMVSIGFLGFIVWAHHMFTVGMDVDTRAYFTSATMIIAIPTGVKVFSWLATLHGGNIKWSPALMWALGFIFLFTVGGLTGIVLANSSLDIVLHDTYYVVAHFHYVLSMGAVFAIMGGFVHWFPLFSGYTLNTTWAKIHFMIMFVGVNLTFFPQHFLGLSGMPRRYSDYPDAYTTWNTISSMGSFISLTAVMLMIFIIWEAFTSKREVLAVDLTSTNLEWLNGCPPPYHTFEEPAFVNPKWS</sequence>
<evidence type="ECO:0000250" key="1">
    <source>
        <dbReference type="UniProtKB" id="P00395"/>
    </source>
</evidence>
<evidence type="ECO:0000250" key="2">
    <source>
        <dbReference type="UniProtKB" id="P00396"/>
    </source>
</evidence>
<evidence type="ECO:0000250" key="3">
    <source>
        <dbReference type="UniProtKB" id="P00401"/>
    </source>
</evidence>
<evidence type="ECO:0000305" key="4"/>
<protein>
    <recommendedName>
        <fullName>Cytochrome c oxidase subunit 1</fullName>
        <ecNumber>7.1.1.9</ecNumber>
    </recommendedName>
    <alternativeName>
        <fullName>Cytochrome c oxidase polypeptide I</fullName>
    </alternativeName>
</protein>
<dbReference type="EC" id="7.1.1.9"/>
<dbReference type="EMBL" id="AP006470">
    <property type="protein sequence ID" value="BAD91722.1"/>
    <property type="molecule type" value="Genomic_DNA"/>
</dbReference>
<dbReference type="SMR" id="Q599A1"/>
<dbReference type="CTD" id="4512"/>
<dbReference type="UniPathway" id="UPA00705"/>
<dbReference type="GO" id="GO:0005743">
    <property type="term" value="C:mitochondrial inner membrane"/>
    <property type="evidence" value="ECO:0007669"/>
    <property type="project" value="UniProtKB-SubCell"/>
</dbReference>
<dbReference type="GO" id="GO:0045277">
    <property type="term" value="C:respiratory chain complex IV"/>
    <property type="evidence" value="ECO:0000250"/>
    <property type="project" value="UniProtKB"/>
</dbReference>
<dbReference type="GO" id="GO:0004129">
    <property type="term" value="F:cytochrome-c oxidase activity"/>
    <property type="evidence" value="ECO:0007669"/>
    <property type="project" value="UniProtKB-EC"/>
</dbReference>
<dbReference type="GO" id="GO:0020037">
    <property type="term" value="F:heme binding"/>
    <property type="evidence" value="ECO:0007669"/>
    <property type="project" value="InterPro"/>
</dbReference>
<dbReference type="GO" id="GO:0046872">
    <property type="term" value="F:metal ion binding"/>
    <property type="evidence" value="ECO:0007669"/>
    <property type="project" value="UniProtKB-KW"/>
</dbReference>
<dbReference type="GO" id="GO:0015990">
    <property type="term" value="P:electron transport coupled proton transport"/>
    <property type="evidence" value="ECO:0007669"/>
    <property type="project" value="TreeGrafter"/>
</dbReference>
<dbReference type="GO" id="GO:0006123">
    <property type="term" value="P:mitochondrial electron transport, cytochrome c to oxygen"/>
    <property type="evidence" value="ECO:0007669"/>
    <property type="project" value="TreeGrafter"/>
</dbReference>
<dbReference type="CDD" id="cd01663">
    <property type="entry name" value="Cyt_c_Oxidase_I"/>
    <property type="match status" value="1"/>
</dbReference>
<dbReference type="FunFam" id="1.20.210.10:FF:000001">
    <property type="entry name" value="Cytochrome c oxidase subunit 1"/>
    <property type="match status" value="1"/>
</dbReference>
<dbReference type="Gene3D" id="1.20.210.10">
    <property type="entry name" value="Cytochrome c oxidase-like, subunit I domain"/>
    <property type="match status" value="1"/>
</dbReference>
<dbReference type="InterPro" id="IPR023616">
    <property type="entry name" value="Cyt_c_oxase-like_su1_dom"/>
</dbReference>
<dbReference type="InterPro" id="IPR036927">
    <property type="entry name" value="Cyt_c_oxase-like_su1_sf"/>
</dbReference>
<dbReference type="InterPro" id="IPR000883">
    <property type="entry name" value="Cyt_C_Oxase_1"/>
</dbReference>
<dbReference type="InterPro" id="IPR023615">
    <property type="entry name" value="Cyt_c_Oxase_su1_BS"/>
</dbReference>
<dbReference type="InterPro" id="IPR033944">
    <property type="entry name" value="Cyt_c_oxase_su1_dom"/>
</dbReference>
<dbReference type="PANTHER" id="PTHR10422">
    <property type="entry name" value="CYTOCHROME C OXIDASE SUBUNIT 1"/>
    <property type="match status" value="1"/>
</dbReference>
<dbReference type="PANTHER" id="PTHR10422:SF18">
    <property type="entry name" value="CYTOCHROME C OXIDASE SUBUNIT 1"/>
    <property type="match status" value="1"/>
</dbReference>
<dbReference type="Pfam" id="PF00115">
    <property type="entry name" value="COX1"/>
    <property type="match status" value="1"/>
</dbReference>
<dbReference type="PRINTS" id="PR01165">
    <property type="entry name" value="CYCOXIDASEI"/>
</dbReference>
<dbReference type="SUPFAM" id="SSF81442">
    <property type="entry name" value="Cytochrome c oxidase subunit I-like"/>
    <property type="match status" value="1"/>
</dbReference>
<dbReference type="PROSITE" id="PS50855">
    <property type="entry name" value="COX1"/>
    <property type="match status" value="1"/>
</dbReference>
<dbReference type="PROSITE" id="PS00077">
    <property type="entry name" value="COX1_CUB"/>
    <property type="match status" value="1"/>
</dbReference>
<feature type="chain" id="PRO_0000261575" description="Cytochrome c oxidase subunit 1">
    <location>
        <begin position="1"/>
        <end position="516"/>
    </location>
</feature>
<feature type="topological domain" description="Mitochondrial matrix" evidence="2">
    <location>
        <begin position="1"/>
        <end position="11"/>
    </location>
</feature>
<feature type="transmembrane region" description="Helical; Name=I" evidence="2">
    <location>
        <begin position="12"/>
        <end position="40"/>
    </location>
</feature>
<feature type="topological domain" description="Mitochondrial intermembrane" evidence="2">
    <location>
        <begin position="41"/>
        <end position="50"/>
    </location>
</feature>
<feature type="transmembrane region" description="Helical; Name=II" evidence="2">
    <location>
        <begin position="51"/>
        <end position="86"/>
    </location>
</feature>
<feature type="topological domain" description="Mitochondrial matrix" evidence="2">
    <location>
        <begin position="87"/>
        <end position="94"/>
    </location>
</feature>
<feature type="transmembrane region" description="Helical; Name=III" evidence="2">
    <location>
        <begin position="95"/>
        <end position="117"/>
    </location>
</feature>
<feature type="topological domain" description="Mitochondrial intermembrane" evidence="2">
    <location>
        <begin position="118"/>
        <end position="140"/>
    </location>
</feature>
<feature type="transmembrane region" description="Helical; Name=IV" evidence="2">
    <location>
        <begin position="141"/>
        <end position="170"/>
    </location>
</feature>
<feature type="topological domain" description="Mitochondrial matrix" evidence="2">
    <location>
        <begin position="171"/>
        <end position="182"/>
    </location>
</feature>
<feature type="transmembrane region" description="Helical; Name=V" evidence="2">
    <location>
        <begin position="183"/>
        <end position="212"/>
    </location>
</feature>
<feature type="topological domain" description="Mitochondrial intermembrane" evidence="2">
    <location>
        <begin position="213"/>
        <end position="227"/>
    </location>
</feature>
<feature type="transmembrane region" description="Helical; Name=VI" evidence="2">
    <location>
        <begin position="228"/>
        <end position="261"/>
    </location>
</feature>
<feature type="topological domain" description="Mitochondrial matrix" evidence="2">
    <location>
        <begin position="262"/>
        <end position="269"/>
    </location>
</feature>
<feature type="transmembrane region" description="Helical; Name=VII" evidence="2">
    <location>
        <begin position="270"/>
        <end position="286"/>
    </location>
</feature>
<feature type="topological domain" description="Mitochondrial intermembrane" evidence="2">
    <location>
        <begin position="287"/>
        <end position="298"/>
    </location>
</feature>
<feature type="transmembrane region" description="Helical; Name=VIII" evidence="2">
    <location>
        <begin position="299"/>
        <end position="327"/>
    </location>
</feature>
<feature type="topological domain" description="Mitochondrial matrix" evidence="2">
    <location>
        <begin position="328"/>
        <end position="335"/>
    </location>
</feature>
<feature type="transmembrane region" description="Helical; Name=IX" evidence="2">
    <location>
        <begin position="336"/>
        <end position="357"/>
    </location>
</feature>
<feature type="topological domain" description="Mitochondrial intermembrane" evidence="2">
    <location>
        <begin position="358"/>
        <end position="370"/>
    </location>
</feature>
<feature type="transmembrane region" description="Helical; Name=X" evidence="2">
    <location>
        <begin position="371"/>
        <end position="400"/>
    </location>
</feature>
<feature type="topological domain" description="Mitochondrial matrix" evidence="2">
    <location>
        <begin position="401"/>
        <end position="406"/>
    </location>
</feature>
<feature type="transmembrane region" description="Helical; Name=XI" evidence="2">
    <location>
        <begin position="407"/>
        <end position="433"/>
    </location>
</feature>
<feature type="topological domain" description="Mitochondrial intermembrane" evidence="2">
    <location>
        <begin position="434"/>
        <end position="446"/>
    </location>
</feature>
<feature type="transmembrane region" description="Helical; Name=XII" evidence="2">
    <location>
        <begin position="447"/>
        <end position="478"/>
    </location>
</feature>
<feature type="topological domain" description="Mitochondrial matrix" evidence="2">
    <location>
        <begin position="479"/>
        <end position="516"/>
    </location>
</feature>
<feature type="binding site" evidence="2">
    <location>
        <position position="40"/>
    </location>
    <ligand>
        <name>Na(+)</name>
        <dbReference type="ChEBI" id="CHEBI:29101"/>
    </ligand>
</feature>
<feature type="binding site" evidence="2">
    <location>
        <position position="45"/>
    </location>
    <ligand>
        <name>Na(+)</name>
        <dbReference type="ChEBI" id="CHEBI:29101"/>
    </ligand>
</feature>
<feature type="binding site" description="axial binding residue" evidence="2">
    <location>
        <position position="61"/>
    </location>
    <ligand>
        <name>Fe(II)-heme a</name>
        <dbReference type="ChEBI" id="CHEBI:61715"/>
        <note>low-spin</note>
    </ligand>
    <ligandPart>
        <name>Fe</name>
        <dbReference type="ChEBI" id="CHEBI:18248"/>
    </ligandPart>
</feature>
<feature type="binding site" evidence="2">
    <location>
        <position position="240"/>
    </location>
    <ligand>
        <name>Cu cation</name>
        <dbReference type="ChEBI" id="CHEBI:23378"/>
        <label>B</label>
    </ligand>
</feature>
<feature type="binding site" evidence="2">
    <location>
        <position position="244"/>
    </location>
    <ligand>
        <name>O2</name>
        <dbReference type="ChEBI" id="CHEBI:15379"/>
    </ligand>
</feature>
<feature type="binding site" evidence="2">
    <location>
        <position position="290"/>
    </location>
    <ligand>
        <name>Cu cation</name>
        <dbReference type="ChEBI" id="CHEBI:23378"/>
        <label>B</label>
    </ligand>
</feature>
<feature type="binding site" evidence="2">
    <location>
        <position position="291"/>
    </location>
    <ligand>
        <name>Cu cation</name>
        <dbReference type="ChEBI" id="CHEBI:23378"/>
        <label>B</label>
    </ligand>
</feature>
<feature type="binding site" evidence="2">
    <location>
        <position position="368"/>
    </location>
    <ligand>
        <name>Mg(2+)</name>
        <dbReference type="ChEBI" id="CHEBI:18420"/>
        <note>ligand shared with MT-CO2</note>
    </ligand>
</feature>
<feature type="binding site" evidence="2">
    <location>
        <position position="369"/>
    </location>
    <ligand>
        <name>Mg(2+)</name>
        <dbReference type="ChEBI" id="CHEBI:18420"/>
        <note>ligand shared with MT-CO2</note>
    </ligand>
</feature>
<feature type="binding site" description="axial binding residue" evidence="2">
    <location>
        <position position="376"/>
    </location>
    <ligand>
        <name>heme a3</name>
        <dbReference type="ChEBI" id="CHEBI:83282"/>
        <note>high-spin</note>
    </ligand>
    <ligandPart>
        <name>Fe</name>
        <dbReference type="ChEBI" id="CHEBI:18248"/>
    </ligandPart>
</feature>
<feature type="binding site" description="axial binding residue" evidence="2">
    <location>
        <position position="378"/>
    </location>
    <ligand>
        <name>Fe(II)-heme a</name>
        <dbReference type="ChEBI" id="CHEBI:61715"/>
        <note>low-spin</note>
    </ligand>
    <ligandPart>
        <name>Fe</name>
        <dbReference type="ChEBI" id="CHEBI:18248"/>
    </ligandPart>
</feature>
<feature type="binding site" evidence="2">
    <location>
        <position position="441"/>
    </location>
    <ligand>
        <name>Na(+)</name>
        <dbReference type="ChEBI" id="CHEBI:29101"/>
    </ligand>
</feature>
<feature type="cross-link" description="1'-histidyl-3'-tyrosine (His-Tyr)" evidence="2">
    <location>
        <begin position="240"/>
        <end position="244"/>
    </location>
</feature>
<gene>
    <name type="primary">MT-CO1</name>
    <name type="synonym">COI</name>
    <name type="synonym">COXI</name>
    <name type="synonym">MTCO1</name>
</gene>
<comment type="function">
    <text evidence="3">Component of the cytochrome c oxidase, the last enzyme in the mitochondrial electron transport chain which drives oxidative phosphorylation. The respiratory chain contains 3 multisubunit complexes succinate dehydrogenase (complex II, CII), ubiquinol-cytochrome c oxidoreductase (cytochrome b-c1 complex, complex III, CIII) and cytochrome c oxidase (complex IV, CIV), that cooperate to transfer electrons derived from NADH and succinate to molecular oxygen, creating an electrochemical gradient over the inner membrane that drives transmembrane transport and the ATP synthase. Cytochrome c oxidase is the component of the respiratory chain that catalyzes the reduction of oxygen to water. Electrons originating from reduced cytochrome c in the intermembrane space (IMS) are transferred via the dinuclear copper A center (CU(A)) of subunit 2 and heme A of subunit 1 to the active site in subunit 1, a binuclear center (BNC) formed by heme A3 and copper B (CU(B)). The BNC reduces molecular oxygen to 2 water molecules using 4 electrons from cytochrome c in the IMS and 4 protons from the mitochondrial matrix.</text>
</comment>
<comment type="catalytic activity">
    <reaction evidence="3">
        <text>4 Fe(II)-[cytochrome c] + O2 + 8 H(+)(in) = 4 Fe(III)-[cytochrome c] + 2 H2O + 4 H(+)(out)</text>
        <dbReference type="Rhea" id="RHEA:11436"/>
        <dbReference type="Rhea" id="RHEA-COMP:10350"/>
        <dbReference type="Rhea" id="RHEA-COMP:14399"/>
        <dbReference type="ChEBI" id="CHEBI:15377"/>
        <dbReference type="ChEBI" id="CHEBI:15378"/>
        <dbReference type="ChEBI" id="CHEBI:15379"/>
        <dbReference type="ChEBI" id="CHEBI:29033"/>
        <dbReference type="ChEBI" id="CHEBI:29034"/>
        <dbReference type="EC" id="7.1.1.9"/>
    </reaction>
    <physiologicalReaction direction="left-to-right" evidence="3">
        <dbReference type="Rhea" id="RHEA:11437"/>
    </physiologicalReaction>
</comment>
<comment type="cofactor">
    <cofactor evidence="2">
        <name>heme</name>
        <dbReference type="ChEBI" id="CHEBI:30413"/>
    </cofactor>
    <text evidence="2">Binds 2 heme A groups non-covalently per subunit.</text>
</comment>
<comment type="cofactor">
    <cofactor evidence="2">
        <name>Cu cation</name>
        <dbReference type="ChEBI" id="CHEBI:23378"/>
    </cofactor>
    <text evidence="2">Binds a copper B center.</text>
</comment>
<comment type="pathway">
    <text evidence="3">Energy metabolism; oxidative phosphorylation.</text>
</comment>
<comment type="subunit">
    <text evidence="1 2">Component of the cytochrome c oxidase (complex IV, CIV), a multisubunit enzyme composed of 14 subunits. The complex is composed of a catalytic core of 3 subunits MT-CO1, MT-CO2 and MT-CO3, encoded in the mitochondrial DNA, and 11 supernumerary subunits COX4I, COX5A, COX5B, COX6A, COX6B, COX6C, COX7A, COX7B, COX7C, COX8 and NDUFA4, which are encoded in the nuclear genome. The complex exists as a monomer or a dimer and forms supercomplexes (SCs) in the inner mitochondrial membrane with NADH-ubiquinone oxidoreductase (complex I, CI) and ubiquinol-cytochrome c oxidoreductase (cytochrome b-c1 complex, complex III, CIII), resulting in different assemblies (supercomplex SCI(1)III(2)IV(1) and megacomplex MCI(2)III(2)IV(2)) (By similarity). As a newly synthesized protein, rapidly incorporates into a multi-subunit assembly intermediate in the inner membrane, called MITRAC (mitochondrial translation regulation assembly intermediate of cytochrome c oxidase) complex, whose core components are COA3/MITRAC12 and COX14. Within the MITRAC complex, interacts with COA3 and with SMIM20/MITRAC7; the interaction with SMIM20 stabilizes the newly synthesized MT-CO1 and prevents its premature turnover. Interacts with TMEM177 in a COX20-dependent manner (By similarity).</text>
</comment>
<comment type="subcellular location">
    <subcellularLocation>
        <location evidence="2">Mitochondrion inner membrane</location>
        <topology evidence="2">Multi-pass membrane protein</topology>
    </subcellularLocation>
</comment>
<comment type="similarity">
    <text evidence="4">Belongs to the heme-copper respiratory oxidase family.</text>
</comment>
<reference key="1">
    <citation type="journal article" date="2005" name="Syst. Biol.">
        <title>Mitochondrial phylogenetics and evolution of mysticete whales.</title>
        <authorList>
            <person name="Sasaki T."/>
            <person name="Nikaido M."/>
            <person name="Hamilton H."/>
            <person name="Goto M."/>
            <person name="Kato H."/>
            <person name="Kanda N."/>
            <person name="Pastene L.A."/>
            <person name="Cao Y."/>
            <person name="Fordyce R.E."/>
            <person name="Hasegawa M."/>
            <person name="Okada N."/>
        </authorList>
    </citation>
    <scope>NUCLEOTIDE SEQUENCE [GENOMIC DNA]</scope>
</reference>
<keyword id="KW-0106">Calcium</keyword>
<keyword id="KW-0186">Copper</keyword>
<keyword id="KW-0249">Electron transport</keyword>
<keyword id="KW-0349">Heme</keyword>
<keyword id="KW-0408">Iron</keyword>
<keyword id="KW-0460">Magnesium</keyword>
<keyword id="KW-0472">Membrane</keyword>
<keyword id="KW-0479">Metal-binding</keyword>
<keyword id="KW-0496">Mitochondrion</keyword>
<keyword id="KW-0999">Mitochondrion inner membrane</keyword>
<keyword id="KW-0679">Respiratory chain</keyword>
<keyword id="KW-0915">Sodium</keyword>
<keyword id="KW-1278">Translocase</keyword>
<keyword id="KW-0812">Transmembrane</keyword>
<keyword id="KW-1133">Transmembrane helix</keyword>
<keyword id="KW-0813">Transport</keyword>
<name>COX1_BALBO</name>
<organism>
    <name type="scientific">Balaenoptera borealis</name>
    <name type="common">Sei whale</name>
    <name type="synonym">Pollack whale</name>
    <dbReference type="NCBI Taxonomy" id="9768"/>
    <lineage>
        <taxon>Eukaryota</taxon>
        <taxon>Metazoa</taxon>
        <taxon>Chordata</taxon>
        <taxon>Craniata</taxon>
        <taxon>Vertebrata</taxon>
        <taxon>Euteleostomi</taxon>
        <taxon>Mammalia</taxon>
        <taxon>Eutheria</taxon>
        <taxon>Laurasiatheria</taxon>
        <taxon>Artiodactyla</taxon>
        <taxon>Whippomorpha</taxon>
        <taxon>Cetacea</taxon>
        <taxon>Mysticeti</taxon>
        <taxon>Balaenopteridae</taxon>
        <taxon>Balaenoptera</taxon>
    </lineage>
</organism>
<accession>Q599A1</accession>
<geneLocation type="mitochondrion"/>